<feature type="chain" id="PRO_0000434129" description="Endoribonuclease HigB">
    <location>
        <begin position="1"/>
        <end position="92"/>
    </location>
</feature>
<feature type="active site" evidence="1">
    <location>
        <position position="92"/>
    </location>
</feature>
<feature type="site" description="Interaction with HigA" evidence="2">
    <location>
        <position position="14"/>
    </location>
</feature>
<feature type="site" description="Interaction with HigA" evidence="2">
    <location>
        <position position="31"/>
    </location>
</feature>
<feature type="mutagenesis site" description="Loss of toxicity and mRNA cleavage, but still binds to ribosomes." evidence="1">
    <original>H</original>
    <variation>Q</variation>
    <location>
        <position position="92"/>
    </location>
</feature>
<feature type="helix" evidence="13">
    <location>
        <begin position="8"/>
        <end position="16"/>
    </location>
</feature>
<feature type="helix" evidence="13">
    <location>
        <begin position="24"/>
        <end position="26"/>
    </location>
</feature>
<feature type="helix" evidence="13">
    <location>
        <begin position="27"/>
        <end position="39"/>
    </location>
</feature>
<feature type="helix" evidence="13">
    <location>
        <begin position="43"/>
        <end position="46"/>
    </location>
</feature>
<feature type="helix" evidence="13">
    <location>
        <begin position="49"/>
        <end position="51"/>
    </location>
</feature>
<feature type="helix" evidence="13">
    <location>
        <begin position="58"/>
        <end position="60"/>
    </location>
</feature>
<feature type="strand" evidence="13">
    <location>
        <begin position="63"/>
        <end position="69"/>
    </location>
</feature>
<feature type="strand" evidence="13">
    <location>
        <begin position="72"/>
        <end position="79"/>
    </location>
</feature>
<feature type="strand" evidence="13">
    <location>
        <begin position="82"/>
        <end position="91"/>
    </location>
</feature>
<gene>
    <name evidence="8 10" type="primary">higB</name>
</gene>
<accession>Q7A225</accession>
<accession>Q52305</accession>
<name>HIGB_PROVU</name>
<reference evidence="8" key="1">
    <citation type="journal article" date="1996" name="Biochem. Biophys. Res. Commun.">
        <title>A new plasmid-encoded proteic killer gene system: cloning, sequencing, and analyzing hig locus of plasmid Rts1.</title>
        <authorList>
            <person name="Tian Q.B."/>
            <person name="Ohnishi M."/>
            <person name="Tabuchi A."/>
            <person name="Terawaki Y."/>
        </authorList>
    </citation>
    <scope>NUCLEOTIDE SEQUENCE [GENOMIC DNA]</scope>
    <scope>FUNCTION</scope>
    <scope>OPERON STRUCTURE</scope>
    <source>
        <plasmid>Rts1</plasmid>
    </source>
</reference>
<reference evidence="9" key="2">
    <citation type="journal article" date="1996" name="Plasmid">
        <title>Instability of Rts1 (drug-resistant factor) replicon: stabilization by DNA fragments derived from Rts1.</title>
        <authorList>
            <person name="Yonemitsu H."/>
            <person name="Fujihashi T."/>
            <person name="Higuchi H."/>
            <person name="Hong H."/>
            <person name="Morishige H."/>
            <person name="Mochida S."/>
            <person name="Kaji A."/>
        </authorList>
    </citation>
    <scope>NUCLEOTIDE SEQUENCE [GENOMIC DNA]</scope>
    <source>
        <plasmid>Rts1</plasmid>
    </source>
</reference>
<reference evidence="10" key="3">
    <citation type="journal article" date="2002" name="J. Bacteriol.">
        <title>Complete nucleotide sequence of plasmid Rts1: implications for evolution of large plasmid Genomes.</title>
        <authorList>
            <person name="Murata T."/>
            <person name="Ohnishi M."/>
            <person name="Ara T."/>
            <person name="Kaneko J."/>
            <person name="Han C.-G."/>
            <person name="Li Y.F."/>
            <person name="Takashima K."/>
            <person name="Nojima H."/>
            <person name="Nakayama K."/>
            <person name="Kaji A."/>
            <person name="Kamio Y."/>
            <person name="Miki T."/>
            <person name="Mori H."/>
            <person name="Ohtsubo E."/>
            <person name="Terawaki Y."/>
            <person name="Hayashi T."/>
        </authorList>
    </citation>
    <scope>NUCLEOTIDE SEQUENCE [GENOMIC DNA]</scope>
    <source>
        <strain evidence="10">UR-75</strain>
        <plasmid>Rts1</plasmid>
    </source>
</reference>
<reference key="4">
    <citation type="journal article" date="2009" name="J. Biol. Chem.">
        <title>Bacterial toxin HigB associates with ribosomes and mediates translation-dependent mRNA cleavage at A-rich sites.</title>
        <authorList>
            <person name="Hurley J.M."/>
            <person name="Woychik N.A."/>
        </authorList>
    </citation>
    <scope>FUNCTION</scope>
    <scope>CATALYTIC ACTIVITY</scope>
    <scope>SUBUNIT</scope>
    <scope>MUTAGENESIS OF HIS-92</scope>
    <source>
        <plasmid>Rts1</plasmid>
    </source>
</reference>
<reference evidence="11 12" key="5">
    <citation type="journal article" date="2014" name="J. Biol. Chem.">
        <title>Structure of the Proteus vulgaris HigB-(HigA)2-HigB toxin-antitoxin complex.</title>
        <authorList>
            <person name="Schureck M.A."/>
            <person name="Maehigashi T."/>
            <person name="Miles S.J."/>
            <person name="Marquez J."/>
            <person name="Cho S.E."/>
            <person name="Erdman R."/>
            <person name="Dunham C.M."/>
        </authorList>
    </citation>
    <scope>X-RAY CRYSTALLOGRAPHY (2.10 ANGSTROMS) IN COMPLEX WITH HIGA</scope>
    <scope>FUNCTION</scope>
    <scope>SUBUNIT</scope>
    <scope>SITES</scope>
</reference>
<protein>
    <recommendedName>
        <fullName evidence="4">Endoribonuclease HigB</fullName>
        <ecNumber evidence="1">3.1.-.-</ecNumber>
    </recommendedName>
    <alternativeName>
        <fullName evidence="5 6">Host inhibition of growth protein B</fullName>
    </alternativeName>
    <alternativeName>
        <fullName evidence="6 8 10">Killer protein</fullName>
    </alternativeName>
    <alternativeName>
        <fullName evidence="4 5">Toxin HigB</fullName>
    </alternativeName>
    <alternativeName>
        <fullName evidence="7">mRNA interferase HigB</fullName>
    </alternativeName>
</protein>
<proteinExistence type="evidence at protein level"/>
<sequence length="92" mass="10742">MIKSFKHKGLKLLFEKGVTSGVPAQDVDRINDRLQAIDTATEIGELNRQIYKLHPLKGDREGYWSITVRANWRITFQFINGDAYILNYEDYH</sequence>
<dbReference type="EC" id="3.1.-.-" evidence="1"/>
<dbReference type="EMBL" id="U43847">
    <property type="protein sequence ID" value="AAC43982.1"/>
    <property type="molecule type" value="Genomic_DNA"/>
</dbReference>
<dbReference type="EMBL" id="U81366">
    <property type="protein sequence ID" value="AAD00515.1"/>
    <property type="molecule type" value="Genomic_DNA"/>
</dbReference>
<dbReference type="EMBL" id="AP004237">
    <property type="protein sequence ID" value="BAB93823.1"/>
    <property type="molecule type" value="Genomic_DNA"/>
</dbReference>
<dbReference type="RefSeq" id="NP_640221.1">
    <property type="nucleotide sequence ID" value="NC_003905.1"/>
</dbReference>
<dbReference type="RefSeq" id="WP_011039853.1">
    <property type="nucleotide sequence ID" value="NC_003905.1"/>
</dbReference>
<dbReference type="PDB" id="4MCT">
    <property type="method" value="X-ray"/>
    <property type="resolution" value="2.80 A"/>
    <property type="chains" value="B/D=1-92"/>
</dbReference>
<dbReference type="PDB" id="4MCX">
    <property type="method" value="X-ray"/>
    <property type="resolution" value="2.10 A"/>
    <property type="chains" value="B/D/F=1-92"/>
</dbReference>
<dbReference type="PDB" id="4PX8">
    <property type="method" value="X-ray"/>
    <property type="resolution" value="1.25 A"/>
    <property type="chains" value="A=2-92"/>
</dbReference>
<dbReference type="PDB" id="4W4G">
    <property type="method" value="X-ray"/>
    <property type="resolution" value="3.30 A"/>
    <property type="chains" value="QY/XY=2-92"/>
</dbReference>
<dbReference type="PDB" id="4YPB">
    <property type="method" value="X-ray"/>
    <property type="resolution" value="3.40 A"/>
    <property type="chains" value="QY/XY=2-91"/>
</dbReference>
<dbReference type="PDB" id="4YY3">
    <property type="method" value="X-ray"/>
    <property type="resolution" value="3.60 A"/>
    <property type="chains" value="Y=2-92"/>
</dbReference>
<dbReference type="PDB" id="4YZV">
    <property type="method" value="X-ray"/>
    <property type="resolution" value="3.10 A"/>
    <property type="chains" value="QY/XY=2-91"/>
</dbReference>
<dbReference type="PDB" id="4ZSN">
    <property type="method" value="X-ray"/>
    <property type="resolution" value="3.60 A"/>
    <property type="chains" value="QY/XY=2-92"/>
</dbReference>
<dbReference type="PDB" id="5IWH">
    <property type="method" value="X-ray"/>
    <property type="resolution" value="1.10 A"/>
    <property type="chains" value="A=2-91"/>
</dbReference>
<dbReference type="PDB" id="5IXL">
    <property type="method" value="X-ray"/>
    <property type="resolution" value="1.55 A"/>
    <property type="chains" value="A/B/C/D/E/F/G/H=2-90"/>
</dbReference>
<dbReference type="PDBsum" id="4MCT"/>
<dbReference type="PDBsum" id="4MCX"/>
<dbReference type="PDBsum" id="4PX8"/>
<dbReference type="PDBsum" id="4W4G"/>
<dbReference type="PDBsum" id="4YPB"/>
<dbReference type="PDBsum" id="4YY3"/>
<dbReference type="PDBsum" id="4YZV"/>
<dbReference type="PDBsum" id="4ZSN"/>
<dbReference type="PDBsum" id="5IWH"/>
<dbReference type="PDBsum" id="5IXL"/>
<dbReference type="SMR" id="Q7A225"/>
<dbReference type="GeneID" id="89492386"/>
<dbReference type="EvolutionaryTrace" id="Q7A225"/>
<dbReference type="GO" id="GO:0003729">
    <property type="term" value="F:mRNA binding"/>
    <property type="evidence" value="ECO:0000314"/>
    <property type="project" value="UniProtKB"/>
</dbReference>
<dbReference type="GO" id="GO:0043022">
    <property type="term" value="F:ribosome binding"/>
    <property type="evidence" value="ECO:0000315"/>
    <property type="project" value="UniProtKB"/>
</dbReference>
<dbReference type="GO" id="GO:0004521">
    <property type="term" value="F:RNA endonuclease activity"/>
    <property type="evidence" value="ECO:0000314"/>
    <property type="project" value="UniProtKB"/>
</dbReference>
<dbReference type="GO" id="GO:0030371">
    <property type="term" value="F:translation repressor activity"/>
    <property type="evidence" value="ECO:0000314"/>
    <property type="project" value="UniProtKB"/>
</dbReference>
<dbReference type="GO" id="GO:0030308">
    <property type="term" value="P:negative regulation of cell growth"/>
    <property type="evidence" value="ECO:0000314"/>
    <property type="project" value="UniProtKB"/>
</dbReference>
<dbReference type="GO" id="GO:0008285">
    <property type="term" value="P:negative regulation of cell population proliferation"/>
    <property type="evidence" value="ECO:0000314"/>
    <property type="project" value="UniProtKB"/>
</dbReference>
<dbReference type="GO" id="GO:0017148">
    <property type="term" value="P:negative regulation of translation"/>
    <property type="evidence" value="ECO:0000314"/>
    <property type="project" value="UniProtKB"/>
</dbReference>
<dbReference type="GO" id="GO:0006276">
    <property type="term" value="P:plasmid maintenance"/>
    <property type="evidence" value="ECO:0000314"/>
    <property type="project" value="UniProtKB"/>
</dbReference>
<dbReference type="GO" id="GO:0006401">
    <property type="term" value="P:RNA catabolic process"/>
    <property type="evidence" value="ECO:0000314"/>
    <property type="project" value="UniProtKB"/>
</dbReference>
<dbReference type="FunFam" id="3.30.2310.20:FF:000011">
    <property type="entry name" value="Endoribonuclease HigB"/>
    <property type="match status" value="1"/>
</dbReference>
<dbReference type="Gene3D" id="3.30.2310.20">
    <property type="entry name" value="RelE-like"/>
    <property type="match status" value="1"/>
</dbReference>
<dbReference type="InterPro" id="IPR007711">
    <property type="entry name" value="HigB-1"/>
</dbReference>
<dbReference type="InterPro" id="IPR035093">
    <property type="entry name" value="RelE/ParE_toxin_dom_sf"/>
</dbReference>
<dbReference type="PANTHER" id="PTHR40266">
    <property type="entry name" value="TOXIN HIGB-1"/>
    <property type="match status" value="1"/>
</dbReference>
<dbReference type="PANTHER" id="PTHR40266:SF2">
    <property type="entry name" value="TOXIN HIGB-1"/>
    <property type="match status" value="1"/>
</dbReference>
<dbReference type="Pfam" id="PF05015">
    <property type="entry name" value="HigB-like_toxin"/>
    <property type="match status" value="1"/>
</dbReference>
<dbReference type="SUPFAM" id="SSF143011">
    <property type="entry name" value="RelE-like"/>
    <property type="match status" value="1"/>
</dbReference>
<geneLocation type="plasmid" evidence="8 10">
    <name>Rts1</name>
</geneLocation>
<keyword id="KW-0002">3D-structure</keyword>
<keyword id="KW-0255">Endonuclease</keyword>
<keyword id="KW-0378">Hydrolase</keyword>
<keyword id="KW-0540">Nuclease</keyword>
<keyword id="KW-0614">Plasmid</keyword>
<keyword id="KW-0694">RNA-binding</keyword>
<keyword id="KW-1277">Toxin-antitoxin system</keyword>
<comment type="function">
    <text evidence="1 2">Toxic component of a type II toxin-antitoxin (TA) system (PubMed:19423702, PubMed:24257752, PubMed:8645296). A ribosome-associated translation-dependent mRNA interferase. Inhibits translation by sequence-specific cleavage of mRNA. Prefers either in-frame or out-of-frame 5'-AAA-3' codons (lysine). Also cleaves the first three AAAs of stretches of four or more A sequences. 20% of codons containing AA are cleaved and occassionally cuts even at a single A (PubMed:19423702).</text>
</comment>
<comment type="subunit">
    <text evidence="1 2 3">Forms a complex with the antitoxin HigA which inhibits the mRNA interferase activity (PubMed:19423702). The heterodimer dimerizes to form a HigB-(HigA)2-HigB tetramer that is able to bind to the DNA (PubMed:24257752).</text>
</comment>
<organism evidence="10">
    <name type="scientific">Proteus vulgaris</name>
    <dbReference type="NCBI Taxonomy" id="585"/>
    <lineage>
        <taxon>Bacteria</taxon>
        <taxon>Pseudomonadati</taxon>
        <taxon>Pseudomonadota</taxon>
        <taxon>Gammaproteobacteria</taxon>
        <taxon>Enterobacterales</taxon>
        <taxon>Morganellaceae</taxon>
        <taxon>Proteus</taxon>
    </lineage>
</organism>
<evidence type="ECO:0000269" key="1">
    <source>
    </source>
</evidence>
<evidence type="ECO:0000269" key="2">
    <source>
    </source>
</evidence>
<evidence type="ECO:0000269" key="3">
    <source>
    </source>
</evidence>
<evidence type="ECO:0000303" key="4">
    <source>
    </source>
</evidence>
<evidence type="ECO:0000303" key="5">
    <source>
    </source>
</evidence>
<evidence type="ECO:0000303" key="6">
    <source>
    </source>
</evidence>
<evidence type="ECO:0000305" key="7"/>
<evidence type="ECO:0000312" key="8">
    <source>
        <dbReference type="EMBL" id="AAC43982.1"/>
    </source>
</evidence>
<evidence type="ECO:0000312" key="9">
    <source>
        <dbReference type="EMBL" id="AAD00515.1"/>
    </source>
</evidence>
<evidence type="ECO:0000312" key="10">
    <source>
        <dbReference type="EMBL" id="BAB93823.1"/>
    </source>
</evidence>
<evidence type="ECO:0007744" key="11">
    <source>
        <dbReference type="PDB" id="4MCT"/>
    </source>
</evidence>
<evidence type="ECO:0007744" key="12">
    <source>
        <dbReference type="PDB" id="4MCX"/>
    </source>
</evidence>
<evidence type="ECO:0007829" key="13">
    <source>
        <dbReference type="PDB" id="5IWH"/>
    </source>
</evidence>